<evidence type="ECO:0000250" key="1">
    <source>
        <dbReference type="UniProtKB" id="Q8WVX9"/>
    </source>
</evidence>
<evidence type="ECO:0000250" key="2">
    <source>
        <dbReference type="UniProtKB" id="Q922J9"/>
    </source>
</evidence>
<evidence type="ECO:0000255" key="3"/>
<evidence type="ECO:0000305" key="4"/>
<evidence type="ECO:0000312" key="5">
    <source>
        <dbReference type="EMBL" id="CAG31171.1"/>
    </source>
</evidence>
<comment type="function">
    <text evidence="2">Catalyzes the reduction of saturated and unsaturated C16 or C18 fatty acyl-CoA to fatty alcohols. It plays an essential role in the production of ether lipids/plasmalogens which synthesis requires fatty alcohols. In parallel, it is also required for wax monoesters production since fatty alcohols also constitute a substrate for their synthesis.</text>
</comment>
<comment type="catalytic activity">
    <reaction evidence="1">
        <text>a long-chain fatty acyl-CoA + 2 NADPH + 2 H(+) = a long-chain primary fatty alcohol + 2 NADP(+) + CoA</text>
        <dbReference type="Rhea" id="RHEA:52716"/>
        <dbReference type="ChEBI" id="CHEBI:15378"/>
        <dbReference type="ChEBI" id="CHEBI:57287"/>
        <dbReference type="ChEBI" id="CHEBI:57783"/>
        <dbReference type="ChEBI" id="CHEBI:58349"/>
        <dbReference type="ChEBI" id="CHEBI:77396"/>
        <dbReference type="ChEBI" id="CHEBI:83139"/>
        <dbReference type="EC" id="1.2.1.84"/>
    </reaction>
    <physiologicalReaction direction="left-to-right" evidence="1">
        <dbReference type="Rhea" id="RHEA:52717"/>
    </physiologicalReaction>
</comment>
<comment type="catalytic activity">
    <reaction evidence="1">
        <text>hexadecanoyl-CoA + 2 NADPH + 2 H(+) = hexadecan-1-ol + 2 NADP(+) + CoA</text>
        <dbReference type="Rhea" id="RHEA:36315"/>
        <dbReference type="ChEBI" id="CHEBI:15378"/>
        <dbReference type="ChEBI" id="CHEBI:16125"/>
        <dbReference type="ChEBI" id="CHEBI:57287"/>
        <dbReference type="ChEBI" id="CHEBI:57379"/>
        <dbReference type="ChEBI" id="CHEBI:57783"/>
        <dbReference type="ChEBI" id="CHEBI:58349"/>
        <dbReference type="EC" id="1.2.1.84"/>
    </reaction>
    <physiologicalReaction direction="left-to-right" evidence="1">
        <dbReference type="Rhea" id="RHEA:36316"/>
    </physiologicalReaction>
</comment>
<comment type="catalytic activity">
    <reaction evidence="2">
        <text>octadecanoyl-CoA + 2 NADPH + 2 H(+) = octadecan-1-ol + 2 NADP(+) + CoA</text>
        <dbReference type="Rhea" id="RHEA:36319"/>
        <dbReference type="ChEBI" id="CHEBI:15378"/>
        <dbReference type="ChEBI" id="CHEBI:32154"/>
        <dbReference type="ChEBI" id="CHEBI:57287"/>
        <dbReference type="ChEBI" id="CHEBI:57394"/>
        <dbReference type="ChEBI" id="CHEBI:57783"/>
        <dbReference type="ChEBI" id="CHEBI:58349"/>
        <dbReference type="EC" id="1.2.1.84"/>
    </reaction>
    <physiologicalReaction direction="left-to-right" evidence="2">
        <dbReference type="Rhea" id="RHEA:36320"/>
    </physiologicalReaction>
</comment>
<comment type="catalytic activity">
    <reaction evidence="2">
        <text>(9Z)-octadecenoyl-CoA + 2 NADPH + 2 H(+) = (9Z)-octadecen-1-ol + 2 NADP(+) + CoA</text>
        <dbReference type="Rhea" id="RHEA:36323"/>
        <dbReference type="ChEBI" id="CHEBI:15378"/>
        <dbReference type="ChEBI" id="CHEBI:57287"/>
        <dbReference type="ChEBI" id="CHEBI:57387"/>
        <dbReference type="ChEBI" id="CHEBI:57783"/>
        <dbReference type="ChEBI" id="CHEBI:58349"/>
        <dbReference type="ChEBI" id="CHEBI:73504"/>
    </reaction>
    <physiologicalReaction direction="left-to-right" evidence="2">
        <dbReference type="Rhea" id="RHEA:36324"/>
    </physiologicalReaction>
</comment>
<comment type="catalytic activity">
    <reaction evidence="2">
        <text>(9Z,12Z)-octadecadienoyl-CoA + 2 NADPH + 2 H(+) = (9Z,12Z)-octadecadien-1-ol + 2 NADP(+) + CoA</text>
        <dbReference type="Rhea" id="RHEA:36363"/>
        <dbReference type="ChEBI" id="CHEBI:15378"/>
        <dbReference type="ChEBI" id="CHEBI:57287"/>
        <dbReference type="ChEBI" id="CHEBI:57383"/>
        <dbReference type="ChEBI" id="CHEBI:57783"/>
        <dbReference type="ChEBI" id="CHEBI:58349"/>
        <dbReference type="ChEBI" id="CHEBI:73534"/>
    </reaction>
    <physiologicalReaction direction="left-to-right" evidence="2">
        <dbReference type="Rhea" id="RHEA:36364"/>
    </physiologicalReaction>
</comment>
<comment type="catalytic activity">
    <reaction evidence="1">
        <text>eicosanoyl-CoA + 2 NADPH + 2 H(+) = eicosan-1-ol + 2 NADP(+) + CoA</text>
        <dbReference type="Rhea" id="RHEA:81727"/>
        <dbReference type="ChEBI" id="CHEBI:15378"/>
        <dbReference type="ChEBI" id="CHEBI:57287"/>
        <dbReference type="ChEBI" id="CHEBI:57380"/>
        <dbReference type="ChEBI" id="CHEBI:57783"/>
        <dbReference type="ChEBI" id="CHEBI:58349"/>
        <dbReference type="ChEBI" id="CHEBI:75627"/>
    </reaction>
    <physiologicalReaction direction="left-to-right" evidence="1">
        <dbReference type="Rhea" id="RHEA:81728"/>
    </physiologicalReaction>
</comment>
<comment type="catalytic activity">
    <reaction evidence="1">
        <text>16-methylheptadecanoyl-CoA + 2 NADPH + 2 H(+) = 16-methylheptadecan-1-ol + 2 NADP(+) + CoA</text>
        <dbReference type="Rhea" id="RHEA:81763"/>
        <dbReference type="ChEBI" id="CHEBI:15378"/>
        <dbReference type="ChEBI" id="CHEBI:57287"/>
        <dbReference type="ChEBI" id="CHEBI:57783"/>
        <dbReference type="ChEBI" id="CHEBI:58349"/>
        <dbReference type="ChEBI" id="CHEBI:84911"/>
        <dbReference type="ChEBI" id="CHEBI:231998"/>
    </reaction>
    <physiologicalReaction direction="left-to-right" evidence="1">
        <dbReference type="Rhea" id="RHEA:81764"/>
    </physiologicalReaction>
</comment>
<comment type="catalytic activity">
    <reaction evidence="1">
        <text>18-methylnonadecanoyl-CoA + 2 NADPH + 2 H(+) = 18-methylnonadecan-1-ol + 2 NADP(+) + CoA</text>
        <dbReference type="Rhea" id="RHEA:81767"/>
        <dbReference type="ChEBI" id="CHEBI:15378"/>
        <dbReference type="ChEBI" id="CHEBI:57287"/>
        <dbReference type="ChEBI" id="CHEBI:57783"/>
        <dbReference type="ChEBI" id="CHEBI:58349"/>
        <dbReference type="ChEBI" id="CHEBI:84914"/>
        <dbReference type="ChEBI" id="CHEBI:231999"/>
    </reaction>
    <physiologicalReaction direction="left-to-right" evidence="1">
        <dbReference type="Rhea" id="RHEA:81768"/>
    </physiologicalReaction>
</comment>
<comment type="subcellular location">
    <subcellularLocation>
        <location evidence="1">Peroxisome membrane</location>
        <topology evidence="1">Single-pass membrane protein</topology>
    </subcellularLocation>
</comment>
<comment type="similarity">
    <text evidence="4">Belongs to the fatty acyl-CoA reductase family.</text>
</comment>
<gene>
    <name evidence="1" type="primary">FAR1</name>
    <name evidence="5" type="ORF">RCJMB04_2p4</name>
</gene>
<organism>
    <name type="scientific">Gallus gallus</name>
    <name type="common">Chicken</name>
    <dbReference type="NCBI Taxonomy" id="9031"/>
    <lineage>
        <taxon>Eukaryota</taxon>
        <taxon>Metazoa</taxon>
        <taxon>Chordata</taxon>
        <taxon>Craniata</taxon>
        <taxon>Vertebrata</taxon>
        <taxon>Euteleostomi</taxon>
        <taxon>Archelosauria</taxon>
        <taxon>Archosauria</taxon>
        <taxon>Dinosauria</taxon>
        <taxon>Saurischia</taxon>
        <taxon>Theropoda</taxon>
        <taxon>Coelurosauria</taxon>
        <taxon>Aves</taxon>
        <taxon>Neognathae</taxon>
        <taxon>Galloanserae</taxon>
        <taxon>Galliformes</taxon>
        <taxon>Phasianidae</taxon>
        <taxon>Phasianinae</taxon>
        <taxon>Gallus</taxon>
    </lineage>
</organism>
<sequence>MVSIPEYYEGKNVLLTGATGFMGKVLLEKLLRSCPKVKAVYVLVRPKAGQTPEARIEEITSCKLFDRLREEQPDFKEKIIVITSELTQPELDLSNPVKEKLIECINIIFHCAATVRFNETLRDAVQLNVLSTKQLLSLAQQMTNLEVFMHVSTAYAYCNRKHIEEVVYPPPVDPKKLMDSLEWMDDSLVNDITPKLIGDRPNTYTYTKALAEYVVQQEGARLNTAIIRPSIVGASWKEPFPGWIDNFNGPSGLFIAAGKGILRTMRASNGAVADLVPVDVVVNMTLAAAWYSGVNRPRNIMVYNCTTGGTNPFHWSEVEYHVISTFKRNPLEQAFRRPNVNLTSNHLLYHYWIAVSHKAPAFLYDIYLRITGRSPRMMKTITRLHKAMVFLEYFTSNSWIWNTENMTMLMNQLSPEDKKTFNFDVRQLHWAEYMENYCMGTKKYVLNEEMSGLPAARKHLNKLRNIRYGFNTILVILIWRIFIARSQMARNIWYFVVSLCYKFLSYFRASSTMRY</sequence>
<keyword id="KW-0444">Lipid biosynthesis</keyword>
<keyword id="KW-0443">Lipid metabolism</keyword>
<keyword id="KW-0472">Membrane</keyword>
<keyword id="KW-0521">NADP</keyword>
<keyword id="KW-0560">Oxidoreductase</keyword>
<keyword id="KW-0576">Peroxisome</keyword>
<keyword id="KW-1185">Reference proteome</keyword>
<keyword id="KW-0812">Transmembrane</keyword>
<keyword id="KW-1133">Transmembrane helix</keyword>
<feature type="chain" id="PRO_0000261398" description="Fatty acyl-CoA reductase 1">
    <location>
        <begin position="1"/>
        <end position="515"/>
    </location>
</feature>
<feature type="topological domain" description="Cytoplasmic" evidence="1">
    <location>
        <begin position="1"/>
        <end position="465"/>
    </location>
</feature>
<feature type="transmembrane region" description="Helical" evidence="3">
    <location>
        <begin position="466"/>
        <end position="483"/>
    </location>
</feature>
<feature type="topological domain" description="Peroxisomal" evidence="1">
    <location>
        <begin position="484"/>
        <end position="515"/>
    </location>
</feature>
<proteinExistence type="evidence at transcript level"/>
<reference key="1">
    <citation type="journal article" date="2005" name="Genome Biol.">
        <title>Full-length cDNAs from chicken bursal lymphocytes to facilitate gene function analysis.</title>
        <authorList>
            <person name="Caldwell R.B."/>
            <person name="Kierzek A.M."/>
            <person name="Arakawa H."/>
            <person name="Bezzubov Y."/>
            <person name="Zaim J."/>
            <person name="Fiedler P."/>
            <person name="Kutter S."/>
            <person name="Blagodatski A."/>
            <person name="Kostovska D."/>
            <person name="Koter M."/>
            <person name="Plachy J."/>
            <person name="Carninci P."/>
            <person name="Hayashizaki Y."/>
            <person name="Buerstedde J.-M."/>
        </authorList>
    </citation>
    <scope>NUCLEOTIDE SEQUENCE [LARGE SCALE MRNA]</scope>
    <source>
        <strain>CB</strain>
        <tissue>Bursa of Fabricius</tissue>
    </source>
</reference>
<accession>Q5ZM72</accession>
<dbReference type="EC" id="1.2.1.84" evidence="1"/>
<dbReference type="EMBL" id="AJ719512">
    <property type="protein sequence ID" value="CAG31171.1"/>
    <property type="molecule type" value="mRNA"/>
</dbReference>
<dbReference type="RefSeq" id="NP_001026350.1">
    <property type="nucleotide sequence ID" value="NM_001031179.2"/>
</dbReference>
<dbReference type="RefSeq" id="XP_015141845.1">
    <property type="nucleotide sequence ID" value="XM_015286359.4"/>
</dbReference>
<dbReference type="RefSeq" id="XP_015141847.1">
    <property type="nucleotide sequence ID" value="XM_015286361.1"/>
</dbReference>
<dbReference type="RefSeq" id="XP_015141848.1">
    <property type="nucleotide sequence ID" value="XM_015286362.4"/>
</dbReference>
<dbReference type="RefSeq" id="XP_040556741.1">
    <property type="nucleotide sequence ID" value="XM_040700807.2"/>
</dbReference>
<dbReference type="RefSeq" id="XP_040556742.1">
    <property type="nucleotide sequence ID" value="XM_040700808.2"/>
</dbReference>
<dbReference type="RefSeq" id="XP_040556744.1">
    <property type="nucleotide sequence ID" value="XM_040700810.2"/>
</dbReference>
<dbReference type="RefSeq" id="XP_040556745.1">
    <property type="nucleotide sequence ID" value="XM_040700811.2"/>
</dbReference>
<dbReference type="RefSeq" id="XP_046774072.1">
    <property type="nucleotide sequence ID" value="XM_046918116.1"/>
</dbReference>
<dbReference type="RefSeq" id="XP_046774073.1">
    <property type="nucleotide sequence ID" value="XM_046918117.1"/>
</dbReference>
<dbReference type="RefSeq" id="XP_046774074.1">
    <property type="nucleotide sequence ID" value="XM_046918118.1"/>
</dbReference>
<dbReference type="RefSeq" id="XP_046774075.1">
    <property type="nucleotide sequence ID" value="XM_046918119.1"/>
</dbReference>
<dbReference type="RefSeq" id="XP_046774077.1">
    <property type="nucleotide sequence ID" value="XM_046918121.1"/>
</dbReference>
<dbReference type="RefSeq" id="XP_046774078.1">
    <property type="nucleotide sequence ID" value="XM_046918122.1"/>
</dbReference>
<dbReference type="SMR" id="Q5ZM72"/>
<dbReference type="FunCoup" id="Q5ZM72">
    <property type="interactions" value="1021"/>
</dbReference>
<dbReference type="STRING" id="9031.ENSGALP00000039164"/>
<dbReference type="PaxDb" id="9031-ENSGALP00000039164"/>
<dbReference type="GeneID" id="423028"/>
<dbReference type="KEGG" id="gga:423028"/>
<dbReference type="CTD" id="84188"/>
<dbReference type="VEuPathDB" id="HostDB:geneid_423028"/>
<dbReference type="eggNOG" id="KOG1221">
    <property type="taxonomic scope" value="Eukaryota"/>
</dbReference>
<dbReference type="HOGENOM" id="CLU_024661_0_2_1"/>
<dbReference type="InParanoid" id="Q5ZM72"/>
<dbReference type="OMA" id="WRDAQER"/>
<dbReference type="OrthoDB" id="429813at2759"/>
<dbReference type="PhylomeDB" id="Q5ZM72"/>
<dbReference type="Reactome" id="R-GGA-9640463">
    <property type="pathway name" value="Wax biosynthesis"/>
</dbReference>
<dbReference type="PRO" id="PR:Q5ZM72"/>
<dbReference type="Proteomes" id="UP000000539">
    <property type="component" value="Chromosome 5"/>
</dbReference>
<dbReference type="Bgee" id="ENSGALG00000005353">
    <property type="expression patterns" value="Expressed in spermatid and 14 other cell types or tissues"/>
</dbReference>
<dbReference type="GO" id="GO:0005778">
    <property type="term" value="C:peroxisomal membrane"/>
    <property type="evidence" value="ECO:0000250"/>
    <property type="project" value="UniProtKB"/>
</dbReference>
<dbReference type="GO" id="GO:0005777">
    <property type="term" value="C:peroxisome"/>
    <property type="evidence" value="ECO:0000318"/>
    <property type="project" value="GO_Central"/>
</dbReference>
<dbReference type="GO" id="GO:0102965">
    <property type="term" value="F:alcohol-forming long-chain fatty acyl-CoA reductase activity"/>
    <property type="evidence" value="ECO:0000250"/>
    <property type="project" value="UniProtKB"/>
</dbReference>
<dbReference type="GO" id="GO:0080019">
    <property type="term" value="F:alcohol-forming very long-chain fatty acyl-CoA reductase activity"/>
    <property type="evidence" value="ECO:0000318"/>
    <property type="project" value="GO_Central"/>
</dbReference>
<dbReference type="GO" id="GO:0008611">
    <property type="term" value="P:ether lipid biosynthetic process"/>
    <property type="evidence" value="ECO:0000250"/>
    <property type="project" value="UniProtKB"/>
</dbReference>
<dbReference type="GO" id="GO:0035336">
    <property type="term" value="P:long-chain fatty-acyl-CoA metabolic process"/>
    <property type="evidence" value="ECO:0000318"/>
    <property type="project" value="GO_Central"/>
</dbReference>
<dbReference type="GO" id="GO:0010025">
    <property type="term" value="P:wax biosynthetic process"/>
    <property type="evidence" value="ECO:0000250"/>
    <property type="project" value="UniProtKB"/>
</dbReference>
<dbReference type="CDD" id="cd05236">
    <property type="entry name" value="FAR-N_SDR_e"/>
    <property type="match status" value="1"/>
</dbReference>
<dbReference type="CDD" id="cd09071">
    <property type="entry name" value="FAR_C"/>
    <property type="match status" value="1"/>
</dbReference>
<dbReference type="FunFam" id="3.40.50.720:FF:000123">
    <property type="entry name" value="Fatty acyl-CoA reductase"/>
    <property type="match status" value="1"/>
</dbReference>
<dbReference type="Gene3D" id="3.40.50.720">
    <property type="entry name" value="NAD(P)-binding Rossmann-like Domain"/>
    <property type="match status" value="1"/>
</dbReference>
<dbReference type="InterPro" id="IPR026055">
    <property type="entry name" value="FAR"/>
</dbReference>
<dbReference type="InterPro" id="IPR033640">
    <property type="entry name" value="FAR_C"/>
</dbReference>
<dbReference type="InterPro" id="IPR013120">
    <property type="entry name" value="Far_NAD-bd"/>
</dbReference>
<dbReference type="InterPro" id="IPR036291">
    <property type="entry name" value="NAD(P)-bd_dom_sf"/>
</dbReference>
<dbReference type="PANTHER" id="PTHR11011:SF119">
    <property type="entry name" value="FATTY ACYL-COA REDUCTASE 1"/>
    <property type="match status" value="1"/>
</dbReference>
<dbReference type="PANTHER" id="PTHR11011">
    <property type="entry name" value="MALE STERILITY PROTEIN 2-RELATED"/>
    <property type="match status" value="1"/>
</dbReference>
<dbReference type="Pfam" id="PF07993">
    <property type="entry name" value="NAD_binding_4"/>
    <property type="match status" value="1"/>
</dbReference>
<dbReference type="Pfam" id="PF03015">
    <property type="entry name" value="Sterile"/>
    <property type="match status" value="1"/>
</dbReference>
<dbReference type="SUPFAM" id="SSF51735">
    <property type="entry name" value="NAD(P)-binding Rossmann-fold domains"/>
    <property type="match status" value="1"/>
</dbReference>
<name>FACR1_CHICK</name>
<protein>
    <recommendedName>
        <fullName evidence="1">Fatty acyl-CoA reductase 1</fullName>
        <shortName>Far1</shortName>
        <ecNumber evidence="1">1.2.1.84</ecNumber>
    </recommendedName>
</protein>